<gene>
    <name type="primary">SD17</name>
    <name type="synonym">ARK1</name>
    <name type="ordered locus">At1g65790</name>
    <name type="ORF">F1E22.15</name>
</gene>
<protein>
    <recommendedName>
        <fullName>Receptor-like serine/threonine-protein kinase SD1-7</fullName>
        <ecNumber>2.7.11.1</ecNumber>
    </recommendedName>
    <alternativeName>
        <fullName>Arabidopsis thaliana receptor kinase 1</fullName>
    </alternativeName>
    <alternativeName>
        <fullName>S-domain-1 (SD1) receptor kinase 7</fullName>
        <shortName>SD1-7</shortName>
    </alternativeName>
</protein>
<name>SD17_ARATH</name>
<feature type="signal peptide" evidence="3">
    <location>
        <begin position="1"/>
        <end position="31"/>
    </location>
</feature>
<feature type="chain" id="PRO_0000401295" description="Receptor-like serine/threonine-protein kinase SD1-7">
    <location>
        <begin position="32"/>
        <end position="843"/>
    </location>
</feature>
<feature type="topological domain" description="Extracellular" evidence="3">
    <location>
        <begin position="32"/>
        <end position="435"/>
    </location>
</feature>
<feature type="transmembrane region" description="Helical" evidence="3">
    <location>
        <begin position="436"/>
        <end position="456"/>
    </location>
</feature>
<feature type="topological domain" description="Cytoplasmic" evidence="3">
    <location>
        <begin position="457"/>
        <end position="843"/>
    </location>
</feature>
<feature type="domain" description="Bulb-type lectin" evidence="4">
    <location>
        <begin position="32"/>
        <end position="151"/>
    </location>
</feature>
<feature type="domain" description="EGF-like; atypical">
    <location>
        <begin position="286"/>
        <end position="322"/>
    </location>
</feature>
<feature type="domain" description="PAN" evidence="6">
    <location>
        <begin position="341"/>
        <end position="422"/>
    </location>
</feature>
<feature type="domain" description="Protein kinase" evidence="5">
    <location>
        <begin position="519"/>
        <end position="809"/>
    </location>
</feature>
<feature type="region of interest" description="CaM-binding" evidence="1">
    <location>
        <begin position="608"/>
        <end position="625"/>
    </location>
</feature>
<feature type="active site" description="Proton acceptor" evidence="5 7">
    <location>
        <position position="644"/>
    </location>
</feature>
<feature type="binding site" evidence="5">
    <location>
        <begin position="525"/>
        <end position="533"/>
    </location>
    <ligand>
        <name>ATP</name>
        <dbReference type="ChEBI" id="CHEBI:30616"/>
    </ligand>
</feature>
<feature type="binding site" evidence="12">
    <location>
        <position position="547"/>
    </location>
    <ligand>
        <name>ATP</name>
        <dbReference type="ChEBI" id="CHEBI:30616"/>
    </ligand>
</feature>
<feature type="modified residue" description="Phosphoserine" evidence="2">
    <location>
        <position position="553"/>
    </location>
</feature>
<feature type="modified residue" description="Phosphoserine" evidence="2">
    <location>
        <position position="648"/>
    </location>
</feature>
<feature type="modified residue" description="Phosphoserine" evidence="2">
    <location>
        <position position="661"/>
    </location>
</feature>
<feature type="modified residue" description="Phosphothreonine" evidence="2">
    <location>
        <position position="678"/>
    </location>
</feature>
<feature type="modified residue" description="Phosphoserine" evidence="2">
    <location>
        <position position="820"/>
    </location>
</feature>
<feature type="glycosylation site" description="N-linked (GlcNAc...) asparagine" evidence="3">
    <location>
        <position position="41"/>
    </location>
</feature>
<feature type="glycosylation site" description="N-linked (GlcNAc...) asparagine" evidence="3">
    <location>
        <position position="92"/>
    </location>
</feature>
<feature type="glycosylation site" description="N-linked (GlcNAc...) asparagine" evidence="3">
    <location>
        <position position="116"/>
    </location>
</feature>
<feature type="glycosylation site" description="N-linked (GlcNAc...) asparagine" evidence="3">
    <location>
        <position position="236"/>
    </location>
</feature>
<feature type="glycosylation site" description="N-linked (GlcNAc...) asparagine" evidence="3">
    <location>
        <position position="251"/>
    </location>
</feature>
<feature type="glycosylation site" description="N-linked (GlcNAc...) asparagine" evidence="3">
    <location>
        <position position="381"/>
    </location>
</feature>
<feature type="disulfide bond" evidence="1">
    <location>
        <begin position="290"/>
        <end position="302"/>
    </location>
</feature>
<feature type="disulfide bond" evidence="1">
    <location>
        <begin position="296"/>
        <end position="310"/>
    </location>
</feature>
<feature type="disulfide bond" evidence="1">
    <location>
        <begin position="372"/>
        <end position="397"/>
    </location>
</feature>
<feature type="disulfide bond" evidence="1">
    <location>
        <begin position="376"/>
        <end position="382"/>
    </location>
</feature>
<feature type="mutagenesis site" description="Loss of kinase activity." evidence="10">
    <original>K</original>
    <variation>A</variation>
    <location>
        <position position="547"/>
    </location>
</feature>
<proteinExistence type="evidence at protein level"/>
<reference key="1">
    <citation type="journal article" date="1992" name="Plant Physiol.">
        <title>An Arabidopsis thaliana gene with sequence similarity to the S-Locus receptor kinase of Brassica oleracea: sequence and expression.</title>
        <authorList>
            <person name="Tobias C.M."/>
            <person name="Howlett B."/>
            <person name="Nasrallah J.B."/>
        </authorList>
    </citation>
    <scope>NUCLEOTIDE SEQUENCE [GENOMIC DNA]</scope>
    <scope>TISSUE SPECIFICITY</scope>
    <scope>ALTERNATIVE SPLICING</scope>
    <source>
        <strain>cv. C24</strain>
    </source>
</reference>
<reference key="2">
    <citation type="journal article" date="1996" name="Plant J.">
        <title>An S-locus-related gene in Arabidopsis encodes a functional kinase and produces two classes of transcripts.</title>
        <authorList>
            <person name="Tobias C.M."/>
            <person name="Nasrallah J.B."/>
        </authorList>
    </citation>
    <scope>NUCLEOTIDE SEQUENCE [GENOMIC DNA / MRNA]</scope>
    <scope>FUNCTION</scope>
    <scope>ALTERNATIVE SPLICING</scope>
    <scope>PHOSPHORYLATION</scope>
    <scope>CATALYTIC ACTIVITY</scope>
    <source>
        <strain>cv. C24</strain>
    </source>
</reference>
<reference key="3">
    <citation type="journal article" date="2000" name="Nature">
        <title>Sequence and analysis of chromosome 1 of the plant Arabidopsis thaliana.</title>
        <authorList>
            <person name="Theologis A."/>
            <person name="Ecker J.R."/>
            <person name="Palm C.J."/>
            <person name="Federspiel N.A."/>
            <person name="Kaul S."/>
            <person name="White O."/>
            <person name="Alonso J."/>
            <person name="Altafi H."/>
            <person name="Araujo R."/>
            <person name="Bowman C.L."/>
            <person name="Brooks S.Y."/>
            <person name="Buehler E."/>
            <person name="Chan A."/>
            <person name="Chao Q."/>
            <person name="Chen H."/>
            <person name="Cheuk R.F."/>
            <person name="Chin C.W."/>
            <person name="Chung M.K."/>
            <person name="Conn L."/>
            <person name="Conway A.B."/>
            <person name="Conway A.R."/>
            <person name="Creasy T.H."/>
            <person name="Dewar K."/>
            <person name="Dunn P."/>
            <person name="Etgu P."/>
            <person name="Feldblyum T.V."/>
            <person name="Feng J.-D."/>
            <person name="Fong B."/>
            <person name="Fujii C.Y."/>
            <person name="Gill J.E."/>
            <person name="Goldsmith A.D."/>
            <person name="Haas B."/>
            <person name="Hansen N.F."/>
            <person name="Hughes B."/>
            <person name="Huizar L."/>
            <person name="Hunter J.L."/>
            <person name="Jenkins J."/>
            <person name="Johnson-Hopson C."/>
            <person name="Khan S."/>
            <person name="Khaykin E."/>
            <person name="Kim C.J."/>
            <person name="Koo H.L."/>
            <person name="Kremenetskaia I."/>
            <person name="Kurtz D.B."/>
            <person name="Kwan A."/>
            <person name="Lam B."/>
            <person name="Langin-Hooper S."/>
            <person name="Lee A."/>
            <person name="Lee J.M."/>
            <person name="Lenz C.A."/>
            <person name="Li J.H."/>
            <person name="Li Y.-P."/>
            <person name="Lin X."/>
            <person name="Liu S.X."/>
            <person name="Liu Z.A."/>
            <person name="Luros J.S."/>
            <person name="Maiti R."/>
            <person name="Marziali A."/>
            <person name="Militscher J."/>
            <person name="Miranda M."/>
            <person name="Nguyen M."/>
            <person name="Nierman W.C."/>
            <person name="Osborne B.I."/>
            <person name="Pai G."/>
            <person name="Peterson J."/>
            <person name="Pham P.K."/>
            <person name="Rizzo M."/>
            <person name="Rooney T."/>
            <person name="Rowley D."/>
            <person name="Sakano H."/>
            <person name="Salzberg S.L."/>
            <person name="Schwartz J.R."/>
            <person name="Shinn P."/>
            <person name="Southwick A.M."/>
            <person name="Sun H."/>
            <person name="Tallon L.J."/>
            <person name="Tambunga G."/>
            <person name="Toriumi M.J."/>
            <person name="Town C.D."/>
            <person name="Utterback T."/>
            <person name="Van Aken S."/>
            <person name="Vaysberg M."/>
            <person name="Vysotskaia V.S."/>
            <person name="Walker M."/>
            <person name="Wu D."/>
            <person name="Yu G."/>
            <person name="Fraser C.M."/>
            <person name="Venter J.C."/>
            <person name="Davis R.W."/>
        </authorList>
    </citation>
    <scope>NUCLEOTIDE SEQUENCE [LARGE SCALE GENOMIC DNA]</scope>
    <source>
        <strain>cv. Columbia</strain>
    </source>
</reference>
<reference key="4">
    <citation type="journal article" date="2017" name="Plant J.">
        <title>Araport11: a complete reannotation of the Arabidopsis thaliana reference genome.</title>
        <authorList>
            <person name="Cheng C.Y."/>
            <person name="Krishnakumar V."/>
            <person name="Chan A.P."/>
            <person name="Thibaud-Nissen F."/>
            <person name="Schobel S."/>
            <person name="Town C.D."/>
        </authorList>
    </citation>
    <scope>GENOME REANNOTATION</scope>
    <source>
        <strain>cv. Columbia</strain>
    </source>
</reference>
<reference key="5">
    <citation type="journal article" date="2002" name="Gene">
        <title>Comparison of the expression patterns of two small gene families of S gene family receptor kinase genes during the defence response in Brassica oleracea and Arabidopsis thaliana.</title>
        <authorList>
            <person name="Pastuglia M."/>
            <person name="Swarup R."/>
            <person name="Rocher A."/>
            <person name="Saindrenan P."/>
            <person name="Roby D."/>
            <person name="Dumas C."/>
            <person name="Cock J.M."/>
        </authorList>
    </citation>
    <scope>INDUCTION BY WOUNDING AND XANTHOMONAS CAMPESTRIS</scope>
</reference>
<reference key="6">
    <citation type="journal article" date="2008" name="Plant Physiol.">
        <title>Interactions between the S-domain receptor kinases and AtPUB-ARM E3 ubiquitin ligases suggest a conserved signaling pathway in Arabidopsis.</title>
        <authorList>
            <person name="Samuel M.A."/>
            <person name="Mudgil Y."/>
            <person name="Salt J.N."/>
            <person name="Delmas F."/>
            <person name="Ramachandran S."/>
            <person name="Chilelli A."/>
            <person name="Goring D.R."/>
        </authorList>
    </citation>
    <scope>GENE FAMILY</scope>
    <scope>NOMENCLATURE</scope>
    <scope>INTERACTION WITH PUB9; PUB13; PUB14 AND PUB38</scope>
    <scope>CATALYTIC ACTIVITY</scope>
    <scope>MUTAGENESIS OF LYS-547</scope>
    <scope>FUNCTION</scope>
    <scope>DISRUPTION PHENOTYPE</scope>
</reference>
<accession>Q39086</accession>
<accession>Q9SHX7</accession>
<organism>
    <name type="scientific">Arabidopsis thaliana</name>
    <name type="common">Mouse-ear cress</name>
    <dbReference type="NCBI Taxonomy" id="3702"/>
    <lineage>
        <taxon>Eukaryota</taxon>
        <taxon>Viridiplantae</taxon>
        <taxon>Streptophyta</taxon>
        <taxon>Embryophyta</taxon>
        <taxon>Tracheophyta</taxon>
        <taxon>Spermatophyta</taxon>
        <taxon>Magnoliopsida</taxon>
        <taxon>eudicotyledons</taxon>
        <taxon>Gunneridae</taxon>
        <taxon>Pentapetalae</taxon>
        <taxon>rosids</taxon>
        <taxon>malvids</taxon>
        <taxon>Brassicales</taxon>
        <taxon>Brassicaceae</taxon>
        <taxon>Camelineae</taxon>
        <taxon>Arabidopsis</taxon>
    </lineage>
</organism>
<evidence type="ECO:0000250" key="1"/>
<evidence type="ECO:0000250" key="2">
    <source>
        <dbReference type="UniProtKB" id="Q9LPZ9"/>
    </source>
</evidence>
<evidence type="ECO:0000255" key="3"/>
<evidence type="ECO:0000255" key="4">
    <source>
        <dbReference type="PROSITE-ProRule" id="PRU00038"/>
    </source>
</evidence>
<evidence type="ECO:0000255" key="5">
    <source>
        <dbReference type="PROSITE-ProRule" id="PRU00159"/>
    </source>
</evidence>
<evidence type="ECO:0000255" key="6">
    <source>
        <dbReference type="PROSITE-ProRule" id="PRU00315"/>
    </source>
</evidence>
<evidence type="ECO:0000255" key="7">
    <source>
        <dbReference type="PROSITE-ProRule" id="PRU10027"/>
    </source>
</evidence>
<evidence type="ECO:0000269" key="8">
    <source>
    </source>
</evidence>
<evidence type="ECO:0000269" key="9">
    <source>
    </source>
</evidence>
<evidence type="ECO:0000269" key="10">
    <source>
    </source>
</evidence>
<evidence type="ECO:0000269" key="11">
    <source>
    </source>
</evidence>
<evidence type="ECO:0000305" key="12"/>
<comment type="function">
    <text evidence="10 11">Involved in the regulation of cellular expansion and differentiation. Mediates subcellular relocalization of PUB9 from nucleus to plasma membrane in a protein-phosphorylation-dependent manner. May be involved in the abscisic acid-mediated signaling pathway, at least during germination.</text>
</comment>
<comment type="catalytic activity">
    <reaction evidence="10 11">
        <text>L-seryl-[protein] + ATP = O-phospho-L-seryl-[protein] + ADP + H(+)</text>
        <dbReference type="Rhea" id="RHEA:17989"/>
        <dbReference type="Rhea" id="RHEA-COMP:9863"/>
        <dbReference type="Rhea" id="RHEA-COMP:11604"/>
        <dbReference type="ChEBI" id="CHEBI:15378"/>
        <dbReference type="ChEBI" id="CHEBI:29999"/>
        <dbReference type="ChEBI" id="CHEBI:30616"/>
        <dbReference type="ChEBI" id="CHEBI:83421"/>
        <dbReference type="ChEBI" id="CHEBI:456216"/>
        <dbReference type="EC" id="2.7.11.1"/>
    </reaction>
</comment>
<comment type="catalytic activity">
    <reaction evidence="10 11">
        <text>L-threonyl-[protein] + ATP = O-phospho-L-threonyl-[protein] + ADP + H(+)</text>
        <dbReference type="Rhea" id="RHEA:46608"/>
        <dbReference type="Rhea" id="RHEA-COMP:11060"/>
        <dbReference type="Rhea" id="RHEA-COMP:11605"/>
        <dbReference type="ChEBI" id="CHEBI:15378"/>
        <dbReference type="ChEBI" id="CHEBI:30013"/>
        <dbReference type="ChEBI" id="CHEBI:30616"/>
        <dbReference type="ChEBI" id="CHEBI:61977"/>
        <dbReference type="ChEBI" id="CHEBI:456216"/>
        <dbReference type="EC" id="2.7.11.1"/>
    </reaction>
</comment>
<comment type="subunit">
    <text evidence="10">Interacts with PUB9, PUB13, PUB14 and PUB38.</text>
</comment>
<comment type="subcellular location">
    <subcellularLocation>
        <location evidence="1">Cell membrane</location>
        <topology evidence="1">Single-pass type I membrane protein</topology>
    </subcellularLocation>
</comment>
<comment type="alternative products">
    <event type="alternative splicing"/>
    <isoform>
        <id>Q39086-1</id>
        <name>1</name>
        <sequence type="displayed"/>
    </isoform>
    <isoform>
        <id>Q39086-2</id>
        <name>2</name>
        <sequence type="not described"/>
    </isoform>
</comment>
<comment type="tissue specificity">
    <text evidence="9">Mostly expressed in leaves, and, to a lower extent, in stems and flower buds.</text>
</comment>
<comment type="induction">
    <text evidence="8">By wounding and Xanthomonas campestris pv. campestris.</text>
</comment>
<comment type="PTM">
    <text evidence="11">Autophosphorylated on serine and threonine residues.</text>
</comment>
<comment type="disruption phenotype">
    <text evidence="10">Reduced abscisic acid (ABA) sensitivity during seed germination.</text>
</comment>
<comment type="miscellaneous">
    <molecule>Isoform 2</molecule>
    <text evidence="12">Receptor domain alone.</text>
</comment>
<comment type="similarity">
    <text evidence="5">Belongs to the protein kinase superfamily. Ser/Thr protein kinase family.</text>
</comment>
<comment type="sequence caution" evidence="12">
    <conflict type="erroneous gene model prediction">
        <sequence resource="EMBL-CDS" id="AAF23832"/>
    </conflict>
    <text>The predicted gene At1g65790 has been split into 2 genes: At1g65790 and At1g65800.</text>
</comment>
<keyword id="KW-0938">Abscisic acid signaling pathway</keyword>
<keyword id="KW-0025">Alternative splicing</keyword>
<keyword id="KW-0067">ATP-binding</keyword>
<keyword id="KW-1003">Cell membrane</keyword>
<keyword id="KW-1015">Disulfide bond</keyword>
<keyword id="KW-0245">EGF-like domain</keyword>
<keyword id="KW-0325">Glycoprotein</keyword>
<keyword id="KW-0418">Kinase</keyword>
<keyword id="KW-0430">Lectin</keyword>
<keyword id="KW-0472">Membrane</keyword>
<keyword id="KW-0547">Nucleotide-binding</keyword>
<keyword id="KW-0597">Phosphoprotein</keyword>
<keyword id="KW-0675">Receptor</keyword>
<keyword id="KW-1185">Reference proteome</keyword>
<keyword id="KW-0723">Serine/threonine-protein kinase</keyword>
<keyword id="KW-0732">Signal</keyword>
<keyword id="KW-0808">Transferase</keyword>
<keyword id="KW-0812">Transmembrane</keyword>
<keyword id="KW-1133">Transmembrane helix</keyword>
<sequence>MRSVPNYHHSFFIFLILILFLAFSVSPNTLSATESLTISSNKTIISPSQIFELGFFNPASSSRWYLGIWYKIIPIRTYVWVANRDNPLSSSNGTLKISGNNLVIFDQSDRPVWSTNITGGDVRSPVAAELLDNGNFLLRDSNNRLLWQSFDFPTDTLLAEMKLGWDQKTGFNRILRSWKTTDDPSSGEFSTKLETSEFPEFYICSKESILYRSGPWNGMRFSSVPGTIQVDYMVYNFTASKEEVTYSYRINKTNLYSRLYLNSAGLLQRLTWFETTQSWKQLWYSPKDLCDNYKVCGNFGYCDSNSLPNCYCIKGFKPVNEQAWDLRDGSAGCMRKTRLSCDGRDGFTRLKRMKLPDTTATIVDREIGLKVCKERCLEDCNCTAFANADIRNGGSGCVIWTREILDMRNYAKGGQDLYVRLAAAELEDKRIKNEKIIGSSIGVSILLLLSFVIFHFWKRKQKRSITIQTPNVDQVRSQDSLINDVVVSRRGYTSKEKKSEYLELPLLELEALATATNNFSNDNKLGQGGFGIVYKGRLLDGKEIAVKRLSKMSSQGTDEFMNEVRLIAKLQHINLVRLLGCCVDKGEKMLIYEYLENLSLDSHLFDQTRSSNLNWQKRFDIINGIARGLLYLHQDSRCRIIHRDLKASNVLLDKNMTPKISDFGMARIFGREETEANTRRVVGTYGYMSPEYAMDGIFSMKSDVFSFGVLLLEIISGKRNKGFYNSNRDLNLLGFVWRHWKEGNELEIVDPINIDSLSSKFPTHEILRCIQIGLLCVQERAEDRPVMSSVMVMLGSETTAIPQPKRPGFCIGRSPLEADSSSSTQRDDECTVNQITLSVIDAR</sequence>
<dbReference type="EC" id="2.7.11.1"/>
<dbReference type="EMBL" id="M80238">
    <property type="protein sequence ID" value="AAA32786.1"/>
    <property type="molecule type" value="Genomic_DNA"/>
</dbReference>
<dbReference type="EMBL" id="AC007234">
    <property type="protein sequence ID" value="AAF23832.1"/>
    <property type="status" value="ALT_SEQ"/>
    <property type="molecule type" value="Genomic_DNA"/>
</dbReference>
<dbReference type="EMBL" id="CP002684">
    <property type="protein sequence ID" value="AEE34423.1"/>
    <property type="molecule type" value="Genomic_DNA"/>
</dbReference>
<dbReference type="PIR" id="S70769">
    <property type="entry name" value="S70769"/>
</dbReference>
<dbReference type="RefSeq" id="NP_176755.1">
    <molecule id="Q39086-1"/>
    <property type="nucleotide sequence ID" value="NM_105252.2"/>
</dbReference>
<dbReference type="SMR" id="Q39086"/>
<dbReference type="BioGRID" id="28111">
    <property type="interactions" value="5"/>
</dbReference>
<dbReference type="FunCoup" id="Q39086">
    <property type="interactions" value="46"/>
</dbReference>
<dbReference type="IntAct" id="Q39086">
    <property type="interactions" value="1"/>
</dbReference>
<dbReference type="STRING" id="3702.Q39086"/>
<dbReference type="GlyCosmos" id="Q39086">
    <property type="glycosylation" value="6 sites, No reported glycans"/>
</dbReference>
<dbReference type="GlyGen" id="Q39086">
    <property type="glycosylation" value="6 sites"/>
</dbReference>
<dbReference type="iPTMnet" id="Q39086"/>
<dbReference type="PaxDb" id="3702-AT1G65790.1"/>
<dbReference type="ProteomicsDB" id="232753">
    <molecule id="Q39086-1"/>
</dbReference>
<dbReference type="EnsemblPlants" id="AT1G65790.1">
    <molecule id="Q39086-1"/>
    <property type="protein sequence ID" value="AT1G65790.1"/>
    <property type="gene ID" value="AT1G65790"/>
</dbReference>
<dbReference type="GeneID" id="842890"/>
<dbReference type="Gramene" id="AT1G65790.1">
    <molecule id="Q39086-1"/>
    <property type="protein sequence ID" value="AT1G65790.1"/>
    <property type="gene ID" value="AT1G65790"/>
</dbReference>
<dbReference type="KEGG" id="ath:AT1G65790"/>
<dbReference type="Araport" id="AT1G65790"/>
<dbReference type="TAIR" id="AT1G65790">
    <property type="gene designation" value="RK1"/>
</dbReference>
<dbReference type="eggNOG" id="ENOG502QS2H">
    <property type="taxonomic scope" value="Eukaryota"/>
</dbReference>
<dbReference type="HOGENOM" id="CLU_000288_116_5_1"/>
<dbReference type="InParanoid" id="Q39086"/>
<dbReference type="PRO" id="PR:Q39086"/>
<dbReference type="Proteomes" id="UP000006548">
    <property type="component" value="Chromosome 1"/>
</dbReference>
<dbReference type="ExpressionAtlas" id="Q39086">
    <property type="expression patterns" value="baseline and differential"/>
</dbReference>
<dbReference type="GO" id="GO:0005634">
    <property type="term" value="C:nucleus"/>
    <property type="evidence" value="ECO:0000314"/>
    <property type="project" value="TAIR"/>
</dbReference>
<dbReference type="GO" id="GO:0005886">
    <property type="term" value="C:plasma membrane"/>
    <property type="evidence" value="ECO:0007669"/>
    <property type="project" value="UniProtKB-SubCell"/>
</dbReference>
<dbReference type="GO" id="GO:0005524">
    <property type="term" value="F:ATP binding"/>
    <property type="evidence" value="ECO:0007669"/>
    <property type="project" value="UniProtKB-KW"/>
</dbReference>
<dbReference type="GO" id="GO:0030246">
    <property type="term" value="F:carbohydrate binding"/>
    <property type="evidence" value="ECO:0007669"/>
    <property type="project" value="UniProtKB-KW"/>
</dbReference>
<dbReference type="GO" id="GO:0004672">
    <property type="term" value="F:protein kinase activity"/>
    <property type="evidence" value="ECO:0000314"/>
    <property type="project" value="TAIR"/>
</dbReference>
<dbReference type="GO" id="GO:0106310">
    <property type="term" value="F:protein serine kinase activity"/>
    <property type="evidence" value="ECO:0007669"/>
    <property type="project" value="RHEA"/>
</dbReference>
<dbReference type="GO" id="GO:0004674">
    <property type="term" value="F:protein serine/threonine kinase activity"/>
    <property type="evidence" value="ECO:0000314"/>
    <property type="project" value="UniProtKB"/>
</dbReference>
<dbReference type="GO" id="GO:0031625">
    <property type="term" value="F:ubiquitin protein ligase binding"/>
    <property type="evidence" value="ECO:0000353"/>
    <property type="project" value="UniProtKB"/>
</dbReference>
<dbReference type="GO" id="GO:0009738">
    <property type="term" value="P:abscisic acid-activated signaling pathway"/>
    <property type="evidence" value="ECO:0007669"/>
    <property type="project" value="UniProtKB-KW"/>
</dbReference>
<dbReference type="GO" id="GO:0071215">
    <property type="term" value="P:cellular response to abscisic acid stimulus"/>
    <property type="evidence" value="ECO:0000315"/>
    <property type="project" value="UniProtKB"/>
</dbReference>
<dbReference type="GO" id="GO:0046777">
    <property type="term" value="P:protein autophosphorylation"/>
    <property type="evidence" value="ECO:0000314"/>
    <property type="project" value="TAIR"/>
</dbReference>
<dbReference type="GO" id="GO:0006468">
    <property type="term" value="P:protein phosphorylation"/>
    <property type="evidence" value="ECO:0000314"/>
    <property type="project" value="TAIR"/>
</dbReference>
<dbReference type="GO" id="GO:0048544">
    <property type="term" value="P:recognition of pollen"/>
    <property type="evidence" value="ECO:0007669"/>
    <property type="project" value="InterPro"/>
</dbReference>
<dbReference type="CDD" id="cd00028">
    <property type="entry name" value="B_lectin"/>
    <property type="match status" value="1"/>
</dbReference>
<dbReference type="CDD" id="cd01098">
    <property type="entry name" value="PAN_AP_plant"/>
    <property type="match status" value="1"/>
</dbReference>
<dbReference type="CDD" id="cd14066">
    <property type="entry name" value="STKc_IRAK"/>
    <property type="match status" value="1"/>
</dbReference>
<dbReference type="FunFam" id="1.10.510.10:FF:000060">
    <property type="entry name" value="G-type lectin S-receptor-like serine/threonine-protein kinase"/>
    <property type="match status" value="1"/>
</dbReference>
<dbReference type="FunFam" id="3.30.200.20:FF:000195">
    <property type="entry name" value="G-type lectin S-receptor-like serine/threonine-protein kinase"/>
    <property type="match status" value="1"/>
</dbReference>
<dbReference type="FunFam" id="2.90.10.10:FF:000009">
    <property type="entry name" value="Receptor-like serine/threonine-protein kinase SD1-8"/>
    <property type="match status" value="1"/>
</dbReference>
<dbReference type="Gene3D" id="2.90.10.10">
    <property type="entry name" value="Bulb-type lectin domain"/>
    <property type="match status" value="1"/>
</dbReference>
<dbReference type="Gene3D" id="3.30.200.20">
    <property type="entry name" value="Phosphorylase Kinase, domain 1"/>
    <property type="match status" value="1"/>
</dbReference>
<dbReference type="Gene3D" id="1.10.510.10">
    <property type="entry name" value="Transferase(Phosphotransferase) domain 1"/>
    <property type="match status" value="1"/>
</dbReference>
<dbReference type="InterPro" id="IPR001480">
    <property type="entry name" value="Bulb-type_lectin_dom"/>
</dbReference>
<dbReference type="InterPro" id="IPR036426">
    <property type="entry name" value="Bulb-type_lectin_dom_sf"/>
</dbReference>
<dbReference type="InterPro" id="IPR011009">
    <property type="entry name" value="Kinase-like_dom_sf"/>
</dbReference>
<dbReference type="InterPro" id="IPR003609">
    <property type="entry name" value="Pan_app"/>
</dbReference>
<dbReference type="InterPro" id="IPR000719">
    <property type="entry name" value="Prot_kinase_dom"/>
</dbReference>
<dbReference type="InterPro" id="IPR017441">
    <property type="entry name" value="Protein_kinase_ATP_BS"/>
</dbReference>
<dbReference type="InterPro" id="IPR022126">
    <property type="entry name" value="S-locus_recpt_kinase"/>
</dbReference>
<dbReference type="InterPro" id="IPR021820">
    <property type="entry name" value="S-locus_recpt_kinase_C"/>
</dbReference>
<dbReference type="InterPro" id="IPR000858">
    <property type="entry name" value="S_locus_glycoprot_dom"/>
</dbReference>
<dbReference type="InterPro" id="IPR001245">
    <property type="entry name" value="Ser-Thr/Tyr_kinase_cat_dom"/>
</dbReference>
<dbReference type="InterPro" id="IPR008271">
    <property type="entry name" value="Ser/Thr_kinase_AS"/>
</dbReference>
<dbReference type="InterPro" id="IPR024171">
    <property type="entry name" value="SRK-like_kinase"/>
</dbReference>
<dbReference type="PANTHER" id="PTHR27002">
    <property type="entry name" value="RECEPTOR-LIKE SERINE/THREONINE-PROTEIN KINASE SD1-8"/>
    <property type="match status" value="1"/>
</dbReference>
<dbReference type="PANTHER" id="PTHR27002:SF1035">
    <property type="entry name" value="RECEPTOR-LIKE SERINE_THREONINE-PROTEIN KINASE SD1-6-RELATED"/>
    <property type="match status" value="1"/>
</dbReference>
<dbReference type="Pfam" id="PF01453">
    <property type="entry name" value="B_lectin"/>
    <property type="match status" value="1"/>
</dbReference>
<dbReference type="Pfam" id="PF11883">
    <property type="entry name" value="DUF3403"/>
    <property type="match status" value="1"/>
</dbReference>
<dbReference type="Pfam" id="PF12398">
    <property type="entry name" value="DUF3660"/>
    <property type="match status" value="1"/>
</dbReference>
<dbReference type="Pfam" id="PF08276">
    <property type="entry name" value="PAN_2"/>
    <property type="match status" value="1"/>
</dbReference>
<dbReference type="Pfam" id="PF07714">
    <property type="entry name" value="PK_Tyr_Ser-Thr"/>
    <property type="match status" value="1"/>
</dbReference>
<dbReference type="Pfam" id="PF00954">
    <property type="entry name" value="S_locus_glycop"/>
    <property type="match status" value="1"/>
</dbReference>
<dbReference type="PIRSF" id="PIRSF000641">
    <property type="entry name" value="SRK"/>
    <property type="match status" value="1"/>
</dbReference>
<dbReference type="SMART" id="SM00108">
    <property type="entry name" value="B_lectin"/>
    <property type="match status" value="1"/>
</dbReference>
<dbReference type="SMART" id="SM00473">
    <property type="entry name" value="PAN_AP"/>
    <property type="match status" value="1"/>
</dbReference>
<dbReference type="SMART" id="SM00220">
    <property type="entry name" value="S_TKc"/>
    <property type="match status" value="1"/>
</dbReference>
<dbReference type="SUPFAM" id="SSF51110">
    <property type="entry name" value="alpha-D-mannose-specific plant lectins"/>
    <property type="match status" value="1"/>
</dbReference>
<dbReference type="SUPFAM" id="SSF56112">
    <property type="entry name" value="Protein kinase-like (PK-like)"/>
    <property type="match status" value="1"/>
</dbReference>
<dbReference type="PROSITE" id="PS50927">
    <property type="entry name" value="BULB_LECTIN"/>
    <property type="match status" value="1"/>
</dbReference>
<dbReference type="PROSITE" id="PS50948">
    <property type="entry name" value="PAN"/>
    <property type="match status" value="1"/>
</dbReference>
<dbReference type="PROSITE" id="PS00107">
    <property type="entry name" value="PROTEIN_KINASE_ATP"/>
    <property type="match status" value="1"/>
</dbReference>
<dbReference type="PROSITE" id="PS50011">
    <property type="entry name" value="PROTEIN_KINASE_DOM"/>
    <property type="match status" value="1"/>
</dbReference>
<dbReference type="PROSITE" id="PS00108">
    <property type="entry name" value="PROTEIN_KINASE_ST"/>
    <property type="match status" value="1"/>
</dbReference>